<sequence length="206" mass="22575">MNSLVLPLCLLALFGFSQGELLVTKKVYFDIKIGNEPIGRIVMGLFGNVVPRTTENFYQLCTGQNGYGYTGSKFHRVIPKFMIQGGDFTKGDGTGGKSIYGAKFADENFQLEHYGAGWLSMANAGQDANESQFFVTTVKCPWLDGRHVVFGKVLEGMDIVKHIEQMPTDSTDRPIEDVVISESGAIELDTPFAVDKTGVGADEEEE</sequence>
<comment type="function">
    <text evidence="1">PPIases accelerate the folding of proteins. It catalyzes the cis-trans isomerization of proline imidic peptide bonds in oligopeptides (By similarity).</text>
</comment>
<comment type="catalytic activity">
    <reaction evidence="1">
        <text>[protein]-peptidylproline (omega=180) = [protein]-peptidylproline (omega=0)</text>
        <dbReference type="Rhea" id="RHEA:16237"/>
        <dbReference type="Rhea" id="RHEA-COMP:10747"/>
        <dbReference type="Rhea" id="RHEA-COMP:10748"/>
        <dbReference type="ChEBI" id="CHEBI:83833"/>
        <dbReference type="ChEBI" id="CHEBI:83834"/>
        <dbReference type="EC" id="5.2.1.8"/>
    </reaction>
</comment>
<comment type="subcellular location">
    <subcellularLocation>
        <location evidence="4">Secreted</location>
    </subcellularLocation>
</comment>
<comment type="tissue specificity">
    <text evidence="4">Component of the acid-insoluble organic matrix of calcified layers of the shell (at protein level).</text>
</comment>
<comment type="similarity">
    <text evidence="2">Belongs to the cyclophilin-type PPIase family.</text>
</comment>
<keyword id="KW-0903">Direct protein sequencing</keyword>
<keyword id="KW-0325">Glycoprotein</keyword>
<keyword id="KW-0413">Isomerase</keyword>
<keyword id="KW-0697">Rotamase</keyword>
<keyword id="KW-0964">Secreted</keyword>
<keyword id="KW-0732">Signal</keyword>
<protein>
    <recommendedName>
        <fullName evidence="1">Putative peptidyl-prolyl cis-trans isomerase</fullName>
        <shortName evidence="1">PPIase</shortName>
        <ecNumber evidence="1">5.2.1.8</ecNumber>
    </recommendedName>
</protein>
<proteinExistence type="evidence at protein level"/>
<accession>B3A0R0</accession>
<name>PPI_LOTGI</name>
<feature type="signal peptide" evidence="2">
    <location>
        <begin position="1"/>
        <end position="19"/>
    </location>
</feature>
<feature type="chain" id="PRO_0000415262" description="Putative peptidyl-prolyl cis-trans isomerase" evidence="2">
    <location>
        <begin position="20"/>
        <end position="206"/>
    </location>
</feature>
<feature type="domain" description="PPIase cyclophilin-type" evidence="3">
    <location>
        <begin position="28"/>
        <end position="185"/>
    </location>
</feature>
<feature type="glycosylation site" description="N-linked (GlcNAc...) asparagine" evidence="2">
    <location>
        <position position="129"/>
    </location>
</feature>
<dbReference type="EC" id="5.2.1.8" evidence="1"/>
<dbReference type="EMBL" id="FC703701">
    <property type="status" value="NOT_ANNOTATED_CDS"/>
    <property type="molecule type" value="mRNA"/>
</dbReference>
<dbReference type="RefSeq" id="XP_009066228.1">
    <property type="nucleotide sequence ID" value="XM_009067980.1"/>
</dbReference>
<dbReference type="SMR" id="B3A0R0"/>
<dbReference type="EnsemblMetazoa" id="LotgiT222979">
    <property type="protein sequence ID" value="LotgiP222979"/>
    <property type="gene ID" value="LotgiG222979"/>
</dbReference>
<dbReference type="GeneID" id="20247086"/>
<dbReference type="KEGG" id="lgi:LOTGIDRAFT_222979"/>
<dbReference type="CTD" id="20247086"/>
<dbReference type="HOGENOM" id="CLU_012062_4_2_1"/>
<dbReference type="OMA" id="CVIKDSG"/>
<dbReference type="OrthoDB" id="193499at2759"/>
<dbReference type="GO" id="GO:0005737">
    <property type="term" value="C:cytoplasm"/>
    <property type="evidence" value="ECO:0007669"/>
    <property type="project" value="TreeGrafter"/>
</dbReference>
<dbReference type="GO" id="GO:0005576">
    <property type="term" value="C:extracellular region"/>
    <property type="evidence" value="ECO:0007669"/>
    <property type="project" value="UniProtKB-SubCell"/>
</dbReference>
<dbReference type="GO" id="GO:0043231">
    <property type="term" value="C:intracellular membrane-bounded organelle"/>
    <property type="evidence" value="ECO:0007669"/>
    <property type="project" value="TreeGrafter"/>
</dbReference>
<dbReference type="GO" id="GO:0016018">
    <property type="term" value="F:cyclosporin A binding"/>
    <property type="evidence" value="ECO:0007669"/>
    <property type="project" value="TreeGrafter"/>
</dbReference>
<dbReference type="GO" id="GO:0003755">
    <property type="term" value="F:peptidyl-prolyl cis-trans isomerase activity"/>
    <property type="evidence" value="ECO:0007669"/>
    <property type="project" value="UniProtKB-KW"/>
</dbReference>
<dbReference type="GO" id="GO:0006457">
    <property type="term" value="P:protein folding"/>
    <property type="evidence" value="ECO:0007669"/>
    <property type="project" value="InterPro"/>
</dbReference>
<dbReference type="FunFam" id="2.40.100.10:FF:000001">
    <property type="entry name" value="Peptidyl-prolyl cis-trans isomerase"/>
    <property type="match status" value="1"/>
</dbReference>
<dbReference type="Gene3D" id="2.40.100.10">
    <property type="entry name" value="Cyclophilin-like"/>
    <property type="match status" value="1"/>
</dbReference>
<dbReference type="InterPro" id="IPR029000">
    <property type="entry name" value="Cyclophilin-like_dom_sf"/>
</dbReference>
<dbReference type="InterPro" id="IPR024936">
    <property type="entry name" value="Cyclophilin-type_PPIase"/>
</dbReference>
<dbReference type="InterPro" id="IPR020892">
    <property type="entry name" value="Cyclophilin-type_PPIase_CS"/>
</dbReference>
<dbReference type="InterPro" id="IPR002130">
    <property type="entry name" value="Cyclophilin-type_PPIase_dom"/>
</dbReference>
<dbReference type="PANTHER" id="PTHR11071">
    <property type="entry name" value="PEPTIDYL-PROLYL CIS-TRANS ISOMERASE"/>
    <property type="match status" value="1"/>
</dbReference>
<dbReference type="PANTHER" id="PTHR11071:SF561">
    <property type="entry name" value="PEPTIDYL-PROLYL CIS-TRANS ISOMERASE D-RELATED"/>
    <property type="match status" value="1"/>
</dbReference>
<dbReference type="Pfam" id="PF00160">
    <property type="entry name" value="Pro_isomerase"/>
    <property type="match status" value="1"/>
</dbReference>
<dbReference type="PIRSF" id="PIRSF001467">
    <property type="entry name" value="Peptidylpro_ismrse"/>
    <property type="match status" value="1"/>
</dbReference>
<dbReference type="PRINTS" id="PR00153">
    <property type="entry name" value="CSAPPISMRASE"/>
</dbReference>
<dbReference type="SUPFAM" id="SSF50891">
    <property type="entry name" value="Cyclophilin-like"/>
    <property type="match status" value="1"/>
</dbReference>
<dbReference type="PROSITE" id="PS00170">
    <property type="entry name" value="CSA_PPIASE_1"/>
    <property type="match status" value="1"/>
</dbReference>
<dbReference type="PROSITE" id="PS50072">
    <property type="entry name" value="CSA_PPIASE_2"/>
    <property type="match status" value="1"/>
</dbReference>
<organism>
    <name type="scientific">Lottia gigantea</name>
    <name type="common">Giant owl limpet</name>
    <dbReference type="NCBI Taxonomy" id="225164"/>
    <lineage>
        <taxon>Eukaryota</taxon>
        <taxon>Metazoa</taxon>
        <taxon>Spiralia</taxon>
        <taxon>Lophotrochozoa</taxon>
        <taxon>Mollusca</taxon>
        <taxon>Gastropoda</taxon>
        <taxon>Patellogastropoda</taxon>
        <taxon>Lottioidea</taxon>
        <taxon>Lottiidae</taxon>
        <taxon>Lottia</taxon>
    </lineage>
</organism>
<evidence type="ECO:0000250" key="1">
    <source>
        <dbReference type="UniProtKB" id="P52013"/>
    </source>
</evidence>
<evidence type="ECO:0000255" key="2"/>
<evidence type="ECO:0000255" key="3">
    <source>
        <dbReference type="PROSITE-ProRule" id="PRU00156"/>
    </source>
</evidence>
<evidence type="ECO:0000269" key="4">
    <source>
    </source>
</evidence>
<evidence type="ECO:0000269" key="5">
    <source ref="1"/>
</evidence>
<evidence type="ECO:0000305" key="6"/>
<reference evidence="6" key="1">
    <citation type="submission" date="2007-12" db="EMBL/GenBank/DDBJ databases">
        <title>DOE Joint Genome Institute Lottia gigantea EST project.</title>
        <authorList>
            <person name="Richardson P."/>
            <person name="Lucas S."/>
            <person name="Rokhsar D."/>
            <person name="Wang M."/>
            <person name="Lindquist E.A."/>
        </authorList>
    </citation>
    <scope>NUCLEOTIDE SEQUENCE [LARGE SCALE MRNA]</scope>
    <scope>IDENTIFICATION</scope>
    <source>
        <tissue evidence="5">Gonad</tissue>
    </source>
</reference>
<reference key="2">
    <citation type="journal article" date="2013" name="FEBS J.">
        <title>The shell-forming proteome of Lottia gigantea reveals both deep conservations and lineage-specific novelties.</title>
        <authorList>
            <person name="Marie B."/>
            <person name="Jackson D.J."/>
            <person name="Ramos-Silva P."/>
            <person name="Zanella-Cleon I."/>
            <person name="Guichard N."/>
            <person name="Marin F."/>
        </authorList>
    </citation>
    <scope>PROTEIN SEQUENCE OF 33-52 AND 81-97</scope>
    <scope>SUBCELLULAR LOCATION</scope>
    <scope>TISSUE SPECIFICITY</scope>
    <source>
        <tissue>Shell</tissue>
    </source>
</reference>